<keyword id="KW-0006">Acetoin catabolism</keyword>
<keyword id="KW-0012">Acyltransferase</keyword>
<keyword id="KW-1185">Reference proteome</keyword>
<keyword id="KW-0749">Sporulation</keyword>
<keyword id="KW-0808">Transferase</keyword>
<reference key="1">
    <citation type="journal article" date="1993" name="Mol. Microbiol.">
        <title>Identification of genes involved in utilization of acetate and acetoin in Bacillus subtilis.</title>
        <authorList>
            <person name="Grundy F.J."/>
            <person name="Waters D.A."/>
            <person name="Takova T.Y."/>
            <person name="Henkin T.M."/>
        </authorList>
    </citation>
    <scope>NUCLEOTIDE SEQUENCE [GENOMIC DNA]</scope>
    <scope>FUNCTION</scope>
    <scope>OPERON STRUCTURE</scope>
    <scope>DISRUPTION PHENOTYPE</scope>
    <source>
        <strain>168</strain>
    </source>
</reference>
<reference key="2">
    <citation type="journal article" date="1997" name="Microbiology">
        <title>Sequencing and functional annotation of the Bacillus subtilis genes in the 200 kb rrnB-dnaB region.</title>
        <authorList>
            <person name="Lapidus A."/>
            <person name="Galleron N."/>
            <person name="Sorokin A."/>
            <person name="Ehrlich S.D."/>
        </authorList>
    </citation>
    <scope>NUCLEOTIDE SEQUENCE [GENOMIC DNA]</scope>
    <source>
        <strain>168</strain>
    </source>
</reference>
<reference key="3">
    <citation type="journal article" date="1997" name="Nature">
        <title>The complete genome sequence of the Gram-positive bacterium Bacillus subtilis.</title>
        <authorList>
            <person name="Kunst F."/>
            <person name="Ogasawara N."/>
            <person name="Moszer I."/>
            <person name="Albertini A.M."/>
            <person name="Alloni G."/>
            <person name="Azevedo V."/>
            <person name="Bertero M.G."/>
            <person name="Bessieres P."/>
            <person name="Bolotin A."/>
            <person name="Borchert S."/>
            <person name="Borriss R."/>
            <person name="Boursier L."/>
            <person name="Brans A."/>
            <person name="Braun M."/>
            <person name="Brignell S.C."/>
            <person name="Bron S."/>
            <person name="Brouillet S."/>
            <person name="Bruschi C.V."/>
            <person name="Caldwell B."/>
            <person name="Capuano V."/>
            <person name="Carter N.M."/>
            <person name="Choi S.-K."/>
            <person name="Codani J.-J."/>
            <person name="Connerton I.F."/>
            <person name="Cummings N.J."/>
            <person name="Daniel R.A."/>
            <person name="Denizot F."/>
            <person name="Devine K.M."/>
            <person name="Duesterhoeft A."/>
            <person name="Ehrlich S.D."/>
            <person name="Emmerson P.T."/>
            <person name="Entian K.-D."/>
            <person name="Errington J."/>
            <person name="Fabret C."/>
            <person name="Ferrari E."/>
            <person name="Foulger D."/>
            <person name="Fritz C."/>
            <person name="Fujita M."/>
            <person name="Fujita Y."/>
            <person name="Fuma S."/>
            <person name="Galizzi A."/>
            <person name="Galleron N."/>
            <person name="Ghim S.-Y."/>
            <person name="Glaser P."/>
            <person name="Goffeau A."/>
            <person name="Golightly E.J."/>
            <person name="Grandi G."/>
            <person name="Guiseppi G."/>
            <person name="Guy B.J."/>
            <person name="Haga K."/>
            <person name="Haiech J."/>
            <person name="Harwood C.R."/>
            <person name="Henaut A."/>
            <person name="Hilbert H."/>
            <person name="Holsappel S."/>
            <person name="Hosono S."/>
            <person name="Hullo M.-F."/>
            <person name="Itaya M."/>
            <person name="Jones L.-M."/>
            <person name="Joris B."/>
            <person name="Karamata D."/>
            <person name="Kasahara Y."/>
            <person name="Klaerr-Blanchard M."/>
            <person name="Klein C."/>
            <person name="Kobayashi Y."/>
            <person name="Koetter P."/>
            <person name="Koningstein G."/>
            <person name="Krogh S."/>
            <person name="Kumano M."/>
            <person name="Kurita K."/>
            <person name="Lapidus A."/>
            <person name="Lardinois S."/>
            <person name="Lauber J."/>
            <person name="Lazarevic V."/>
            <person name="Lee S.-M."/>
            <person name="Levine A."/>
            <person name="Liu H."/>
            <person name="Masuda S."/>
            <person name="Mauel C."/>
            <person name="Medigue C."/>
            <person name="Medina N."/>
            <person name="Mellado R.P."/>
            <person name="Mizuno M."/>
            <person name="Moestl D."/>
            <person name="Nakai S."/>
            <person name="Noback M."/>
            <person name="Noone D."/>
            <person name="O'Reilly M."/>
            <person name="Ogawa K."/>
            <person name="Ogiwara A."/>
            <person name="Oudega B."/>
            <person name="Park S.-H."/>
            <person name="Parro V."/>
            <person name="Pohl T.M."/>
            <person name="Portetelle D."/>
            <person name="Porwollik S."/>
            <person name="Prescott A.M."/>
            <person name="Presecan E."/>
            <person name="Pujic P."/>
            <person name="Purnelle B."/>
            <person name="Rapoport G."/>
            <person name="Rey M."/>
            <person name="Reynolds S."/>
            <person name="Rieger M."/>
            <person name="Rivolta C."/>
            <person name="Rocha E."/>
            <person name="Roche B."/>
            <person name="Rose M."/>
            <person name="Sadaie Y."/>
            <person name="Sato T."/>
            <person name="Scanlan E."/>
            <person name="Schleich S."/>
            <person name="Schroeter R."/>
            <person name="Scoffone F."/>
            <person name="Sekiguchi J."/>
            <person name="Sekowska A."/>
            <person name="Seror S.J."/>
            <person name="Serror P."/>
            <person name="Shin B.-S."/>
            <person name="Soldo B."/>
            <person name="Sorokin A."/>
            <person name="Tacconi E."/>
            <person name="Takagi T."/>
            <person name="Takahashi H."/>
            <person name="Takemaru K."/>
            <person name="Takeuchi M."/>
            <person name="Tamakoshi A."/>
            <person name="Tanaka T."/>
            <person name="Terpstra P."/>
            <person name="Tognoni A."/>
            <person name="Tosato V."/>
            <person name="Uchiyama S."/>
            <person name="Vandenbol M."/>
            <person name="Vannier F."/>
            <person name="Vassarotti A."/>
            <person name="Viari A."/>
            <person name="Wambutt R."/>
            <person name="Wedler E."/>
            <person name="Wedler H."/>
            <person name="Weitzenegger T."/>
            <person name="Winters P."/>
            <person name="Wipat A."/>
            <person name="Yamamoto H."/>
            <person name="Yamane K."/>
            <person name="Yasumoto K."/>
            <person name="Yata K."/>
            <person name="Yoshida K."/>
            <person name="Yoshikawa H.-F."/>
            <person name="Zumstein E."/>
            <person name="Yoshikawa H."/>
            <person name="Danchin A."/>
        </authorList>
    </citation>
    <scope>NUCLEOTIDE SEQUENCE [LARGE SCALE GENOMIC DNA]</scope>
    <source>
        <strain>168</strain>
    </source>
</reference>
<reference key="4">
    <citation type="journal article" date="1994" name="J. Bacteriol.">
        <title>Catabolite regulation of Bacillus subtilis acetate and acetoin utilization genes by CcpA.</title>
        <authorList>
            <person name="Grundy F.J."/>
            <person name="Turinsky A.J."/>
            <person name="Henkin T.M."/>
        </authorList>
    </citation>
    <scope>INDUCTION BY GLUCOSE AND CCPA</scope>
</reference>
<reference key="5">
    <citation type="journal article" date="2006" name="J. Bacteriol.">
        <title>Control of acetyl-coenzyme A synthetase (AcsA) activity by acetylation/deacetylation without NAD(+) involvement in Bacillus subtilis.</title>
        <authorList>
            <person name="Gardner J.G."/>
            <person name="Grundy F.J."/>
            <person name="Henkin T.M."/>
            <person name="Escalante-Semerena J.C."/>
        </authorList>
    </citation>
    <scope>FUNCTION</scope>
    <scope>CATALYTIC ACTIVITY</scope>
    <scope>BIOPHYSICOCHEMICAL PROPERTIES</scope>
    <scope>DISRUPTION PHENOTYPE</scope>
    <source>
        <strain>168 / SMY</strain>
    </source>
</reference>
<reference key="6">
    <citation type="journal article" date="2007" name="J. Bacteriol.">
        <title>Analysis of temporal gene expression during Bacillus subtilis spore germination and outgrowth.</title>
        <authorList>
            <person name="Keijser B.J."/>
            <person name="Ter Beek A."/>
            <person name="Rauwerda H."/>
            <person name="Schuren F."/>
            <person name="Montijn R."/>
            <person name="van der Spek H."/>
            <person name="Brul S."/>
        </authorList>
    </citation>
    <scope>INDUCTION</scope>
</reference>
<reference key="7">
    <citation type="journal article" date="2008" name="J. Bacteriol.">
        <title>Biochemical and mutational analyses of AcuA, the acetyltransferase enzyme that controls the activity of the acetyl coenzyme a synthetase (AcsA) in Bacillus subtilis.</title>
        <authorList>
            <person name="Gardner J.G."/>
            <person name="Escalante-Semerena J.C."/>
        </authorList>
    </citation>
    <scope>FUNCTION</scope>
    <scope>CATALYTIC ACTIVITY</scope>
    <scope>ACTIVITY REGULATION</scope>
    <scope>BIOPHYSICOCHEMICAL PROPERTIES</scope>
    <scope>SUBUNIT</scope>
    <scope>MUTAGENESIS OF ARG-43; THR-170; HIS-178 AND GLY-188</scope>
</reference>
<reference key="8">
    <citation type="journal article" date="2009" name="J. Bacteriol.">
        <title>In Bacillus subtilis, the sirtuin protein deacetylase, encoded by the srtN gene (formerly yhdZ), and functions encoded by the acuABC genes control the activity of acetyl coenzyme A synthetase.</title>
        <authorList>
            <person name="Gardner J.G."/>
            <person name="Escalante-Semerena J.C."/>
        </authorList>
    </citation>
    <scope>FUNCTION</scope>
    <scope>CATALYTIC ACTIVITY</scope>
    <scope>DISRUPTION PHENOTYPE</scope>
    <source>
        <strain>168 / SMY</strain>
    </source>
</reference>
<feature type="chain" id="PRO_0000074571" description="Acetoin utilization protein AcuA">
    <location>
        <begin position="1"/>
        <end position="210"/>
    </location>
</feature>
<feature type="domain" description="N-acetyltransferase" evidence="1">
    <location>
        <begin position="20"/>
        <end position="161"/>
    </location>
</feature>
<feature type="mutagenesis site" description="25% retention of activity. Two to three-fold reduction in KM for acetyl-CoA. Three-fold slower turnover number. Retains 54% of the activity of the wild-type after heating it to 100 degrees Celsius for 30 minutes." evidence="4">
    <original>R</original>
    <variation>H</variation>
    <location>
        <position position="43"/>
    </location>
</feature>
<feature type="mutagenesis site" description="25% retention of activity. Two to three fold reduction in KM for acetyl-CoA. Three-fold slower turnover number. Retains 60% of the activity of the wild-type after heating it to 100 degrees Celsius for 30 minutes." evidence="4">
    <original>T</original>
    <variation>A</variation>
    <location>
        <position position="170"/>
    </location>
</feature>
<feature type="mutagenesis site" description="Inactive. Leads to a rapid turnover of the enzyme." evidence="4">
    <original>H</original>
    <variation>P</variation>
    <location>
        <position position="178"/>
    </location>
</feature>
<feature type="mutagenesis site" description="Inactive. Leads to a rapid turnover of the enzyme." evidence="4">
    <original>G</original>
    <variation>E</variation>
    <location>
        <position position="188"/>
    </location>
</feature>
<proteinExistence type="evidence at protein level"/>
<gene>
    <name type="primary">acuA</name>
    <name type="ordered locus">BSU29690</name>
</gene>
<protein>
    <recommendedName>
        <fullName>Acetoin utilization protein AcuA</fullName>
        <ecNumber>2.3.1.-</ecNumber>
    </recommendedName>
    <alternativeName>
        <fullName>Protein acetyltransferase AcuA</fullName>
    </alternativeName>
</protein>
<comment type="function">
    <text evidence="2 4 5 7">Part of the acuABC operon, which is possibly involved in the breakdown of acetoin and butanediol. Acts as an acetyltransferase inactivating acetyl-CoA synthetase AcsA via acetylation at a Lys residue.</text>
</comment>
<comment type="activity regulation">
    <text evidence="4">Activity is sensitive to salt concentration, a high concentration of KCL (500 mM) is needed for complete inactivation.</text>
</comment>
<comment type="biophysicochemical properties">
    <kinetics>
        <KM evidence="2 4">22 mM for acetyl-CoA</KM>
        <Vmax evidence="2 4">0.8 mmol/min/mg enzyme</Vmax>
    </kinetics>
    <phDependence>
        <text evidence="2 4">Optimum pH is 7.5.</text>
    </phDependence>
    <temperatureDependence>
        <text evidence="2 4">Optimum temperature 37 degrees Celsius. Thermostable. Retains 93, 78 and 15 % of its protein acetyltransferase activity after heating to 100 degrees Celsius for 5, 30 and 60 minutes, respectively.</text>
    </temperatureDependence>
</comment>
<comment type="pathway">
    <text>Ketone degradation; acetoin degradation.</text>
</comment>
<comment type="subunit">
    <text evidence="4">Monomer.</text>
</comment>
<comment type="induction">
    <text evidence="3 6">Expression is maximal in stationary phase and is repressed by the addition of glucose to the growth medium. CcpA protein is required for glucose repression. Acetoin does not act as an inducer. Up-regulated during the 80 to 100 minutes of spore germination and into the outgrowth phase.</text>
</comment>
<comment type="disruption phenotype">
    <text evidence="2 5 7">Does not impair growth on acetate. Disruption together with other acetoin utilization genes acuB and acuC results in poor growth and sporulation on acetoin or butanediol. Triple deletion of acuA, acuC and srtN improves the growth on acetate but it does not reach that of wild-type under low-acetate conditions.</text>
</comment>
<comment type="similarity">
    <text evidence="8">Belongs to the acetyltransferase family.</text>
</comment>
<sequence>MEHHKTYHSANIKTATGSLLIEGPVSPEDLAGYEFHKDLTAFRPPREQHEALVDIAGLPEGRIIIARDGRTIVGYVTYLYPDPLERWSEGNMEDLIELGAIEVAPDYRGCAVGKTLLTVSMMDEQMENYIVMTTEYYWHWDLKGMKKDVWEYRKIMEKMMNAGGLVWFATDEPEISSHPANCLMARIGKNVSQESIEQFDRLRFYHRYMY</sequence>
<organism>
    <name type="scientific">Bacillus subtilis (strain 168)</name>
    <dbReference type="NCBI Taxonomy" id="224308"/>
    <lineage>
        <taxon>Bacteria</taxon>
        <taxon>Bacillati</taxon>
        <taxon>Bacillota</taxon>
        <taxon>Bacilli</taxon>
        <taxon>Bacillales</taxon>
        <taxon>Bacillaceae</taxon>
        <taxon>Bacillus</taxon>
    </lineage>
</organism>
<dbReference type="EC" id="2.3.1.-"/>
<dbReference type="EMBL" id="L17309">
    <property type="protein sequence ID" value="AAA68286.1"/>
    <property type="molecule type" value="Genomic_DNA"/>
</dbReference>
<dbReference type="EMBL" id="AF008220">
    <property type="protein sequence ID" value="AAC00396.1"/>
    <property type="molecule type" value="Genomic_DNA"/>
</dbReference>
<dbReference type="EMBL" id="AL009126">
    <property type="protein sequence ID" value="CAB14947.1"/>
    <property type="molecule type" value="Genomic_DNA"/>
</dbReference>
<dbReference type="PIR" id="S39645">
    <property type="entry name" value="S39645"/>
</dbReference>
<dbReference type="RefSeq" id="NP_390847.1">
    <property type="nucleotide sequence ID" value="NC_000964.3"/>
</dbReference>
<dbReference type="RefSeq" id="WP_003229296.1">
    <property type="nucleotide sequence ID" value="NZ_OZ025638.1"/>
</dbReference>
<dbReference type="SMR" id="P39065"/>
<dbReference type="FunCoup" id="P39065">
    <property type="interactions" value="38"/>
</dbReference>
<dbReference type="STRING" id="224308.BSU29690"/>
<dbReference type="PaxDb" id="224308-BSU29690"/>
<dbReference type="EnsemblBacteria" id="CAB14947">
    <property type="protein sequence ID" value="CAB14947"/>
    <property type="gene ID" value="BSU_29690"/>
</dbReference>
<dbReference type="GeneID" id="937633"/>
<dbReference type="KEGG" id="bsu:BSU29690"/>
<dbReference type="PATRIC" id="fig|224308.179.peg.3227"/>
<dbReference type="eggNOG" id="COG0454">
    <property type="taxonomic scope" value="Bacteria"/>
</dbReference>
<dbReference type="InParanoid" id="P39065"/>
<dbReference type="OrthoDB" id="5416633at2"/>
<dbReference type="PhylomeDB" id="P39065"/>
<dbReference type="BioCyc" id="BSUB:BSU29690-MONOMER"/>
<dbReference type="BRENDA" id="2.3.1.B34">
    <property type="organism ID" value="658"/>
</dbReference>
<dbReference type="SABIO-RK" id="P39065"/>
<dbReference type="UniPathway" id="UPA00040"/>
<dbReference type="Proteomes" id="UP000001570">
    <property type="component" value="Chromosome"/>
</dbReference>
<dbReference type="GO" id="GO:0019152">
    <property type="term" value="F:acetoin dehydrogenase (NAD+) activity"/>
    <property type="evidence" value="ECO:0000316"/>
    <property type="project" value="UniProtKB"/>
</dbReference>
<dbReference type="GO" id="GO:0043894">
    <property type="term" value="F:acetyl-CoA synthetase acetyltransferase activity"/>
    <property type="evidence" value="ECO:0000314"/>
    <property type="project" value="UniProtKB"/>
</dbReference>
<dbReference type="GO" id="GO:0045150">
    <property type="term" value="P:acetoin catabolic process"/>
    <property type="evidence" value="ECO:0000316"/>
    <property type="project" value="UniProtKB"/>
</dbReference>
<dbReference type="GO" id="GO:0034078">
    <property type="term" value="P:butanediol catabolic process"/>
    <property type="evidence" value="ECO:0000316"/>
    <property type="project" value="UniProtKB"/>
</dbReference>
<dbReference type="GO" id="GO:0045014">
    <property type="term" value="P:carbon catabolite repression of transcription by glucose"/>
    <property type="evidence" value="ECO:0000314"/>
    <property type="project" value="UniProtKB"/>
</dbReference>
<dbReference type="GO" id="GO:0071311">
    <property type="term" value="P:cellular response to acetate"/>
    <property type="evidence" value="ECO:0000316"/>
    <property type="project" value="UniProtKB"/>
</dbReference>
<dbReference type="GO" id="GO:0009847">
    <property type="term" value="P:spore germination"/>
    <property type="evidence" value="ECO:0000270"/>
    <property type="project" value="UniProtKB"/>
</dbReference>
<dbReference type="GO" id="GO:0030435">
    <property type="term" value="P:sporulation resulting in formation of a cellular spore"/>
    <property type="evidence" value="ECO:0007669"/>
    <property type="project" value="UniProtKB-KW"/>
</dbReference>
<dbReference type="CDD" id="cd04301">
    <property type="entry name" value="NAT_SF"/>
    <property type="match status" value="1"/>
</dbReference>
<dbReference type="FunFam" id="3.40.630.30:FF:000081">
    <property type="entry name" value="Acetoin utilization protein AcuA"/>
    <property type="match status" value="1"/>
</dbReference>
<dbReference type="Gene3D" id="3.40.630.30">
    <property type="match status" value="1"/>
</dbReference>
<dbReference type="InterPro" id="IPR024699">
    <property type="entry name" value="AcuA"/>
</dbReference>
<dbReference type="InterPro" id="IPR016181">
    <property type="entry name" value="Acyl_CoA_acyltransferase"/>
</dbReference>
<dbReference type="InterPro" id="IPR000182">
    <property type="entry name" value="GNAT_dom"/>
</dbReference>
<dbReference type="Pfam" id="PF00583">
    <property type="entry name" value="Acetyltransf_1"/>
    <property type="match status" value="1"/>
</dbReference>
<dbReference type="PIRSF" id="PIRSF021278">
    <property type="entry name" value="AcuA"/>
    <property type="match status" value="1"/>
</dbReference>
<dbReference type="SUPFAM" id="SSF55729">
    <property type="entry name" value="Acyl-CoA N-acyltransferases (Nat)"/>
    <property type="match status" value="1"/>
</dbReference>
<dbReference type="PROSITE" id="PS51186">
    <property type="entry name" value="GNAT"/>
    <property type="match status" value="1"/>
</dbReference>
<name>ACUA_BACSU</name>
<accession>P39065</accession>
<evidence type="ECO:0000255" key="1">
    <source>
        <dbReference type="PROSITE-ProRule" id="PRU00532"/>
    </source>
</evidence>
<evidence type="ECO:0000269" key="2">
    <source>
    </source>
</evidence>
<evidence type="ECO:0000269" key="3">
    <source>
    </source>
</evidence>
<evidence type="ECO:0000269" key="4">
    <source>
    </source>
</evidence>
<evidence type="ECO:0000269" key="5">
    <source>
    </source>
</evidence>
<evidence type="ECO:0000269" key="6">
    <source>
    </source>
</evidence>
<evidence type="ECO:0000269" key="7">
    <source>
    </source>
</evidence>
<evidence type="ECO:0000305" key="8"/>